<proteinExistence type="inferred from homology"/>
<evidence type="ECO:0000255" key="1">
    <source>
        <dbReference type="HAMAP-Rule" id="MF_00149"/>
    </source>
</evidence>
<evidence type="ECO:0000256" key="2">
    <source>
        <dbReference type="SAM" id="MobiDB-lite"/>
    </source>
</evidence>
<evidence type="ECO:0000305" key="3"/>
<protein>
    <recommendedName>
        <fullName evidence="1">DNA mismatch repair protein MutL</fullName>
    </recommendedName>
</protein>
<gene>
    <name evidence="1" type="primary">mutL</name>
    <name type="ordered locus">TTHA1323</name>
</gene>
<comment type="function">
    <text evidence="1">This protein is involved in the repair of mismatches in DNA. It is required for dam-dependent methyl-directed DNA mismatch repair. May act as a 'molecular matchmaker', a protein that promotes the formation of a stable complex between two or more DNA-binding proteins in an ATP-dependent manner without itself being part of a final effector complex.</text>
</comment>
<comment type="similarity">
    <text evidence="1">Belongs to the DNA mismatch repair MutL/HexB family.</text>
</comment>
<reference key="1">
    <citation type="submission" date="1998-11" db="EMBL/GenBank/DDBJ databases">
        <title>Mismatch repair enzyme, MutL, from an extremely thermophilic bacterium.</title>
        <authorList>
            <person name="Shiba F."/>
            <person name="Kato R."/>
            <person name="Kuramitsu S."/>
        </authorList>
    </citation>
    <scope>NUCLEOTIDE SEQUENCE [GENOMIC DNA]</scope>
</reference>
<reference key="2">
    <citation type="submission" date="2004-11" db="EMBL/GenBank/DDBJ databases">
        <title>Complete genome sequence of Thermus thermophilus HB8.</title>
        <authorList>
            <person name="Masui R."/>
            <person name="Kurokawa K."/>
            <person name="Nakagawa N."/>
            <person name="Tokunaga F."/>
            <person name="Koyama Y."/>
            <person name="Shibata T."/>
            <person name="Oshima T."/>
            <person name="Yokoyama S."/>
            <person name="Yasunaga T."/>
            <person name="Kuramitsu S."/>
        </authorList>
    </citation>
    <scope>NUCLEOTIDE SEQUENCE [LARGE SCALE GENOMIC DNA]</scope>
    <source>
        <strain>ATCC 27634 / DSM 579 / HB8</strain>
    </source>
</reference>
<feature type="chain" id="PRO_0000177986" description="DNA mismatch repair protein MutL">
    <location>
        <begin position="1"/>
        <end position="545"/>
    </location>
</feature>
<feature type="region of interest" description="Disordered" evidence="2">
    <location>
        <begin position="517"/>
        <end position="545"/>
    </location>
</feature>
<feature type="sequence conflict" description="In Ref. 1; BAA87903." evidence="3" ref="1">
    <original>S</original>
    <variation>T</variation>
    <location>
        <position position="455"/>
    </location>
</feature>
<name>MUTL_THET8</name>
<dbReference type="EMBL" id="AB020210">
    <property type="protein sequence ID" value="BAA87903.1"/>
    <property type="molecule type" value="Genomic_DNA"/>
</dbReference>
<dbReference type="EMBL" id="AP008226">
    <property type="protein sequence ID" value="BAD71146.1"/>
    <property type="molecule type" value="Genomic_DNA"/>
</dbReference>
<dbReference type="RefSeq" id="WP_011228596.1">
    <property type="nucleotide sequence ID" value="NC_006461.1"/>
</dbReference>
<dbReference type="RefSeq" id="YP_144589.1">
    <property type="nucleotide sequence ID" value="NC_006461.1"/>
</dbReference>
<dbReference type="SMR" id="Q9RA54"/>
<dbReference type="EnsemblBacteria" id="BAD71146">
    <property type="protein sequence ID" value="BAD71146"/>
    <property type="gene ID" value="BAD71146"/>
</dbReference>
<dbReference type="GeneID" id="3169099"/>
<dbReference type="KEGG" id="ttj:TTHA1323"/>
<dbReference type="PATRIC" id="fig|300852.9.peg.1301"/>
<dbReference type="eggNOG" id="COG0323">
    <property type="taxonomic scope" value="Bacteria"/>
</dbReference>
<dbReference type="HOGENOM" id="CLU_004131_4_1_0"/>
<dbReference type="PhylomeDB" id="Q9RA54"/>
<dbReference type="Proteomes" id="UP000000532">
    <property type="component" value="Chromosome"/>
</dbReference>
<dbReference type="GO" id="GO:0032300">
    <property type="term" value="C:mismatch repair complex"/>
    <property type="evidence" value="ECO:0007669"/>
    <property type="project" value="InterPro"/>
</dbReference>
<dbReference type="GO" id="GO:0005524">
    <property type="term" value="F:ATP binding"/>
    <property type="evidence" value="ECO:0007669"/>
    <property type="project" value="InterPro"/>
</dbReference>
<dbReference type="GO" id="GO:0016887">
    <property type="term" value="F:ATP hydrolysis activity"/>
    <property type="evidence" value="ECO:0007669"/>
    <property type="project" value="InterPro"/>
</dbReference>
<dbReference type="GO" id="GO:0140664">
    <property type="term" value="F:ATP-dependent DNA damage sensor activity"/>
    <property type="evidence" value="ECO:0007669"/>
    <property type="project" value="InterPro"/>
</dbReference>
<dbReference type="GO" id="GO:0030983">
    <property type="term" value="F:mismatched DNA binding"/>
    <property type="evidence" value="ECO:0007669"/>
    <property type="project" value="InterPro"/>
</dbReference>
<dbReference type="GO" id="GO:0006298">
    <property type="term" value="P:mismatch repair"/>
    <property type="evidence" value="ECO:0007669"/>
    <property type="project" value="UniProtKB-UniRule"/>
</dbReference>
<dbReference type="CDD" id="cd16926">
    <property type="entry name" value="HATPase_MutL-MLH-PMS-like"/>
    <property type="match status" value="1"/>
</dbReference>
<dbReference type="CDD" id="cd00782">
    <property type="entry name" value="MutL_Trans"/>
    <property type="match status" value="1"/>
</dbReference>
<dbReference type="Gene3D" id="3.30.230.10">
    <property type="match status" value="1"/>
</dbReference>
<dbReference type="Gene3D" id="3.30.565.10">
    <property type="entry name" value="Histidine kinase-like ATPase, C-terminal domain"/>
    <property type="match status" value="1"/>
</dbReference>
<dbReference type="Gene3D" id="3.30.1540.20">
    <property type="entry name" value="MutL, C-terminal domain, dimerisation subdomain"/>
    <property type="match status" value="1"/>
</dbReference>
<dbReference type="Gene3D" id="3.30.1370.100">
    <property type="entry name" value="MutL, C-terminal domain, regulatory subdomain"/>
    <property type="match status" value="1"/>
</dbReference>
<dbReference type="HAMAP" id="MF_00149">
    <property type="entry name" value="DNA_mis_repair"/>
    <property type="match status" value="1"/>
</dbReference>
<dbReference type="InterPro" id="IPR020667">
    <property type="entry name" value="DNA_mismatch_repair_MutL"/>
</dbReference>
<dbReference type="InterPro" id="IPR013507">
    <property type="entry name" value="DNA_mismatch_S5_2-like"/>
</dbReference>
<dbReference type="InterPro" id="IPR036890">
    <property type="entry name" value="HATPase_C_sf"/>
</dbReference>
<dbReference type="InterPro" id="IPR002099">
    <property type="entry name" value="MutL/Mlh/PMS"/>
</dbReference>
<dbReference type="InterPro" id="IPR038973">
    <property type="entry name" value="MutL/Mlh/Pms-like"/>
</dbReference>
<dbReference type="InterPro" id="IPR014790">
    <property type="entry name" value="MutL_C"/>
</dbReference>
<dbReference type="InterPro" id="IPR042120">
    <property type="entry name" value="MutL_C_dimsub"/>
</dbReference>
<dbReference type="InterPro" id="IPR042121">
    <property type="entry name" value="MutL_C_regsub"/>
</dbReference>
<dbReference type="InterPro" id="IPR037198">
    <property type="entry name" value="MutL_C_sf"/>
</dbReference>
<dbReference type="InterPro" id="IPR020568">
    <property type="entry name" value="Ribosomal_Su5_D2-typ_SF"/>
</dbReference>
<dbReference type="InterPro" id="IPR014721">
    <property type="entry name" value="Ribsml_uS5_D2-typ_fold_subgr"/>
</dbReference>
<dbReference type="NCBIfam" id="TIGR00585">
    <property type="entry name" value="mutl"/>
    <property type="match status" value="1"/>
</dbReference>
<dbReference type="PANTHER" id="PTHR10073">
    <property type="entry name" value="DNA MISMATCH REPAIR PROTEIN MLH, PMS, MUTL"/>
    <property type="match status" value="1"/>
</dbReference>
<dbReference type="PANTHER" id="PTHR10073:SF12">
    <property type="entry name" value="DNA MISMATCH REPAIR PROTEIN MLH1"/>
    <property type="match status" value="1"/>
</dbReference>
<dbReference type="Pfam" id="PF01119">
    <property type="entry name" value="DNA_mis_repair"/>
    <property type="match status" value="1"/>
</dbReference>
<dbReference type="Pfam" id="PF02518">
    <property type="entry name" value="HATPase_c"/>
    <property type="match status" value="1"/>
</dbReference>
<dbReference type="Pfam" id="PF08676">
    <property type="entry name" value="MutL_C"/>
    <property type="match status" value="1"/>
</dbReference>
<dbReference type="SMART" id="SM01340">
    <property type="entry name" value="DNA_mis_repair"/>
    <property type="match status" value="1"/>
</dbReference>
<dbReference type="SMART" id="SM00853">
    <property type="entry name" value="MutL_C"/>
    <property type="match status" value="1"/>
</dbReference>
<dbReference type="SUPFAM" id="SSF55874">
    <property type="entry name" value="ATPase domain of HSP90 chaperone/DNA topoisomerase II/histidine kinase"/>
    <property type="match status" value="1"/>
</dbReference>
<dbReference type="SUPFAM" id="SSF118116">
    <property type="entry name" value="DNA mismatch repair protein MutL"/>
    <property type="match status" value="1"/>
</dbReference>
<dbReference type="SUPFAM" id="SSF54211">
    <property type="entry name" value="Ribosomal protein S5 domain 2-like"/>
    <property type="match status" value="1"/>
</dbReference>
<organism>
    <name type="scientific">Thermus thermophilus (strain ATCC 27634 / DSM 579 / HB8)</name>
    <dbReference type="NCBI Taxonomy" id="300852"/>
    <lineage>
        <taxon>Bacteria</taxon>
        <taxon>Thermotogati</taxon>
        <taxon>Deinococcota</taxon>
        <taxon>Deinococci</taxon>
        <taxon>Thermales</taxon>
        <taxon>Thermaceae</taxon>
        <taxon>Thermus</taxon>
    </lineage>
</organism>
<accession>Q9RA54</accession>
<accession>Q5SIP6</accession>
<keyword id="KW-0227">DNA damage</keyword>
<keyword id="KW-0234">DNA repair</keyword>
<keyword id="KW-1185">Reference proteome</keyword>
<sequence length="545" mass="60103">MIRPLPPELRGLLARGEVLLTVKDAVRELLENALDAGARRVRVELWGGGLKRLVVEDDGEGIPLEDLPLAVEPYATSKLQDLEGIRTLGFRGQALYALRQAARLRIRSRPRGQLGGGLLLAEGERVEVRPVPAPPGTRVEVEGLFLGEGRDPKGEVRGVLELLKRYLLHHPRLALALFAEGEARLLFPGAGLEEAARLAFGRLLAKRLLPLAYGAGGLEVQGLVSRPEVSRTRPDRLFLAVNGRPVAFPEGLLRRVRRAYRELLPEGHYPVGVLNLFLPQEAFRLRLDARKEEVVLSEEVEALVEEALLALFRRENLARALPEPKPLQPLSPPTASGLPRLRFLAQFRESYLLAEAGDTLYVVDQHAAHERILYEDLLKRVAEGPKPLPRPLLVPLAPEEEALLEAGQEALAALFRWEPFGPGRVRLLMAPAFLHPYPLLLPEVFKEALRGEGRSLKALLARLACLPAVKAGHPLGEAQGQALLDALLACETPWACPHGRPVLLALKEEDLIRRFGRRSGARGGGEARPRPQEESFPEAPLPREP</sequence>